<evidence type="ECO:0000269" key="1">
    <source>
    </source>
</evidence>
<evidence type="ECO:0000269" key="2">
    <source>
    </source>
</evidence>
<evidence type="ECO:0000269" key="3">
    <source>
    </source>
</evidence>
<evidence type="ECO:0000269" key="4">
    <source>
    </source>
</evidence>
<evidence type="ECO:0000303" key="5">
    <source>
    </source>
</evidence>
<evidence type="ECO:0000303" key="6">
    <source>
    </source>
</evidence>
<evidence type="ECO:0000305" key="7"/>
<evidence type="ECO:0000312" key="8">
    <source>
        <dbReference type="EMBL" id="AAX93858.1"/>
    </source>
</evidence>
<evidence type="ECO:0007829" key="9">
    <source>
        <dbReference type="PDB" id="3N2W"/>
    </source>
</evidence>
<evidence type="ECO:0007829" key="10">
    <source>
        <dbReference type="PDB" id="3N5I"/>
    </source>
</evidence>
<evidence type="ECO:0007829" key="11">
    <source>
        <dbReference type="PDB" id="3NFB"/>
    </source>
</evidence>
<organism evidence="8">
    <name type="scientific">Sphingosinicella xenopeptidilytica</name>
    <dbReference type="NCBI Taxonomy" id="364098"/>
    <lineage>
        <taxon>Bacteria</taxon>
        <taxon>Pseudomonadati</taxon>
        <taxon>Pseudomonadota</taxon>
        <taxon>Alphaproteobacteria</taxon>
        <taxon>Sphingomonadales</taxon>
        <taxon>Sphingosinicellaceae</taxon>
        <taxon>Sphingosinicella</taxon>
    </lineage>
</organism>
<name>BAPA_SPHXN</name>
<proteinExistence type="evidence at protein level"/>
<keyword id="KW-0002">3D-structure</keyword>
<keyword id="KW-0031">Aminopeptidase</keyword>
<keyword id="KW-0903">Direct protein sequencing</keyword>
<keyword id="KW-0378">Hydrolase</keyword>
<keyword id="KW-0574">Periplasm</keyword>
<keyword id="KW-0645">Protease</keyword>
<keyword id="KW-0732">Signal</keyword>
<reference key="1">
    <citation type="journal article" date="2005" name="J. Bacteriol.">
        <title>A novel beta-peptidyl aminopeptidase (BapA) from strain 3-2W4 cleaves peptide bonds of synthetic beta-tri- and beta-dipeptides.</title>
        <authorList>
            <person name="Geueke B."/>
            <person name="Namoto K."/>
            <person name="Seebach D."/>
            <person name="Kohler H.P."/>
        </authorList>
    </citation>
    <scope>NUCLEOTIDE SEQUENCE [GENOMIC DNA]</scope>
    <scope>PROTEIN SEQUENCE OF 30-49 AND 279-291</scope>
    <scope>FUNCTION</scope>
    <scope>CATALYTIC ACTIVITY</scope>
    <scope>SUBUNIT</scope>
    <scope>SUBCELLULAR LOCATION</scope>
    <source>
        <strain evidence="8">DSM 17130 / CCUG 52537 / 3-2W4</strain>
    </source>
</reference>
<reference key="2">
    <citation type="journal article" date="2006" name="FEBS J.">
        <title>Bacterial beta-peptidyl aminopeptidases with unique substrate specificities for beta-oligopeptides and mixed beta,alpha-oligopeptides.</title>
        <authorList>
            <person name="Geueke B."/>
            <person name="Heck T."/>
            <person name="Limbach M."/>
            <person name="Nesatyy V."/>
            <person name="Seebach D."/>
            <person name="Kohler H.P."/>
        </authorList>
    </citation>
    <scope>CATALYTIC ACTIVITY</scope>
    <scope>FUNCTION</scope>
    <scope>ACTIVITY REGULATION</scope>
    <scope>BIOPHYSICOCHEMICAL PROPERTIES</scope>
</reference>
<reference key="3">
    <citation type="journal article" date="2012" name="Structure">
        <title>Autoproteolytic and catalytic mechanisms for the beta-aminopeptidase BapA--a member of the Ntn hydrolase family.</title>
        <authorList>
            <person name="Merz T."/>
            <person name="Heck T."/>
            <person name="Geueke B."/>
            <person name="Mittl P.R."/>
            <person name="Briand C."/>
            <person name="Seebach D."/>
            <person name="Kohler H.P."/>
            <person name="Gruetter M.G."/>
        </authorList>
    </citation>
    <scope>X-RAY CRYSTALLOGRAPHY (1.45 ANGSTROMS)</scope>
    <scope>X-RAY CRYSTALLOGRAPHY (1.80 ANGSTROMS) IN COMPLEX WITH INHIBITOR AEBSF</scope>
    <scope>CATALYTIC ACTIVITY</scope>
    <scope>ACTIVE SITE</scope>
    <scope>AUTOPROTEOLYTIC PROCESSING</scope>
    <scope>SUBUNIT</scope>
    <scope>MUTAGENESIS OF GLU-162; LYS-277; ASN-278; SER-279; SER-317 AND GLU-319</scope>
</reference>
<reference key="4">
    <citation type="journal article" date="2012" name="ChemBioChem">
        <title>Crystal structures of BapA complexes with beta-lactam-derived inhibitors illustrate substrate specificity and enantioselectivity of beta-aminopeptidases.</title>
        <authorList>
            <person name="Heck T."/>
            <person name="Merz T."/>
            <person name="Reimer A."/>
            <person name="Seebach D."/>
            <person name="Rentsch D."/>
            <person name="Briand C."/>
            <person name="Gruetter M.G."/>
            <person name="Kohler H.P."/>
            <person name="Geueke B."/>
        </authorList>
    </citation>
    <scope>X-RAY CRYSTALLOGRAPHY (1.70 ANGSTROMS)IN COMPLEX WITH INHIBITOR AMPICILLIN</scope>
    <scope>X-RAY CRYSTALLOGRAPHY (1.85 ANGSTROMS) IN COMPLEX WITH INHIBITOR AMP(HYD)</scope>
    <scope>CATALYTIC ACTIVITY</scope>
    <scope>ACTIVITY REGULATION</scope>
    <scope>BIOPHYSICOCHEMICAL PROPERTIES</scope>
    <scope>SUBUNIT</scope>
</reference>
<accession>Q52VH2</accession>
<feature type="signal peptide" evidence="1">
    <location>
        <begin position="1"/>
        <end position="29"/>
    </location>
</feature>
<feature type="chain" id="PRO_0000430763" description="Beta-peptidyl aminopeptidase BapA alpha subunit" evidence="5">
    <location>
        <begin position="30"/>
        <end position="278"/>
    </location>
</feature>
<feature type="chain" id="PRO_0000430764" description="Beta-peptidyl aminopeptidase BapA beta subunit" evidence="5">
    <location>
        <begin position="279"/>
        <end position="402"/>
    </location>
</feature>
<feature type="active site" description="Nucleophile" evidence="6">
    <location>
        <position position="279"/>
    </location>
</feature>
<feature type="active site" description="Proton donor/acceptor" evidence="6">
    <location>
        <position position="317"/>
    </location>
</feature>
<feature type="active site" description="Proton donor/acceptor" evidence="6">
    <location>
        <position position="319"/>
    </location>
</feature>
<feature type="mutagenesis site" description="Delays precursor cleavage and abolishes enzymatic activity." evidence="4">
    <original>E</original>
    <variation>A</variation>
    <location>
        <position position="162"/>
    </location>
</feature>
<feature type="mutagenesis site" description="Delays precursor cleavage." evidence="4">
    <original>K</original>
    <variation>A</variation>
    <location>
        <position position="277"/>
    </location>
</feature>
<feature type="mutagenesis site" description="Delays precursor cleavage." evidence="4">
    <original>N</original>
    <variation>A</variation>
    <location>
        <position position="278"/>
    </location>
</feature>
<feature type="mutagenesis site" description="Abolishes precursor cleavage and enzymatic activity." evidence="4">
    <original>S</original>
    <variation>A</variation>
    <location>
        <position position="279"/>
    </location>
</feature>
<feature type="mutagenesis site" description="Abolishes precursor cleavage and enzymatic activity." evidence="4">
    <original>S</original>
    <variation>A</variation>
    <location>
        <position position="317"/>
    </location>
</feature>
<feature type="mutagenesis site" description="Abolishes precursor cleavage and reduces enzymatic activity." evidence="4">
    <original>E</original>
    <variation>A</variation>
    <location>
        <position position="319"/>
    </location>
</feature>
<feature type="helix" evidence="9">
    <location>
        <begin position="33"/>
        <end position="36"/>
    </location>
</feature>
<feature type="strand" evidence="9">
    <location>
        <begin position="46"/>
        <end position="49"/>
    </location>
</feature>
<feature type="helix" evidence="9">
    <location>
        <begin position="50"/>
        <end position="52"/>
    </location>
</feature>
<feature type="strand" evidence="9">
    <location>
        <begin position="57"/>
        <end position="65"/>
    </location>
</feature>
<feature type="turn" evidence="10">
    <location>
        <begin position="72"/>
        <end position="74"/>
    </location>
</feature>
<feature type="strand" evidence="9">
    <location>
        <begin position="77"/>
        <end position="85"/>
    </location>
</feature>
<feature type="strand" evidence="9">
    <location>
        <begin position="94"/>
        <end position="103"/>
    </location>
</feature>
<feature type="helix" evidence="9">
    <location>
        <begin position="111"/>
        <end position="117"/>
    </location>
</feature>
<feature type="strand" evidence="9">
    <location>
        <begin position="118"/>
        <end position="122"/>
    </location>
</feature>
<feature type="strand" evidence="9">
    <location>
        <begin position="124"/>
        <end position="128"/>
    </location>
</feature>
<feature type="helix" evidence="9">
    <location>
        <begin position="129"/>
        <end position="131"/>
    </location>
</feature>
<feature type="helix" evidence="9">
    <location>
        <begin position="132"/>
        <end position="146"/>
    </location>
</feature>
<feature type="helix" evidence="9">
    <location>
        <begin position="149"/>
        <end position="155"/>
    </location>
</feature>
<feature type="strand" evidence="9">
    <location>
        <begin position="159"/>
        <end position="163"/>
    </location>
</feature>
<feature type="turn" evidence="9">
    <location>
        <begin position="166"/>
        <end position="168"/>
    </location>
</feature>
<feature type="helix" evidence="9">
    <location>
        <begin position="178"/>
        <end position="187"/>
    </location>
</feature>
<feature type="strand" evidence="9">
    <location>
        <begin position="189"/>
        <end position="192"/>
    </location>
</feature>
<feature type="helix" evidence="9">
    <location>
        <begin position="199"/>
        <end position="201"/>
    </location>
</feature>
<feature type="strand" evidence="9">
    <location>
        <begin position="212"/>
        <end position="222"/>
    </location>
</feature>
<feature type="strand" evidence="9">
    <location>
        <begin position="225"/>
        <end position="235"/>
    </location>
</feature>
<feature type="turn" evidence="9">
    <location>
        <begin position="240"/>
        <end position="242"/>
    </location>
</feature>
<feature type="turn" evidence="9">
    <location>
        <begin position="251"/>
        <end position="253"/>
    </location>
</feature>
<feature type="turn" evidence="9">
    <location>
        <begin position="269"/>
        <end position="272"/>
    </location>
</feature>
<feature type="strand" evidence="9">
    <location>
        <begin position="280"/>
        <end position="286"/>
    </location>
</feature>
<feature type="helix" evidence="9">
    <location>
        <begin position="292"/>
        <end position="300"/>
    </location>
</feature>
<feature type="helix" evidence="9">
    <location>
        <begin position="302"/>
        <end position="308"/>
    </location>
</feature>
<feature type="strand" evidence="9">
    <location>
        <begin position="319"/>
        <end position="330"/>
    </location>
</feature>
<feature type="helix" evidence="9">
    <location>
        <begin position="347"/>
        <end position="371"/>
    </location>
</feature>
<feature type="helix" evidence="11">
    <location>
        <begin position="378"/>
        <end position="380"/>
    </location>
</feature>
<feature type="strand" evidence="9">
    <location>
        <begin position="381"/>
        <end position="383"/>
    </location>
</feature>
<feature type="helix" evidence="9">
    <location>
        <begin position="388"/>
        <end position="398"/>
    </location>
</feature>
<sequence>MTSTQRLWSGALPLLTALIVSIAATASLAGPRARDLGVPFEGTPGALNAITDVAGVEVGHTTVISGDGAMVIGKGPYRTGVTIIHPLGKTSLDGVAAGRAVINGTGEWTGMHLVDEVGQFLGPIALTGTGNVGLVHQSMMDWSVGKVPEEALFSRLLPVVAETLDNRLNDVFGHGLTRDHVFAALDGAKGGPVAEGNVGGGTGMIAYTFKGGIGTSSRVVSAGDTRYTVGVLVQANHGDRNDLRIAGVQIGKEIKGAWPEVNGIVAAGPDAGKPQDKNSLLIVIATDAPLMPHQLERMARRAALGVGRNGSTAGALSGEFALAFSTSHVIPLGGKPRLPAIINDTDSETMNALFRGVVQATEEALVNQLVASETMTGANNAKVYGIPHDQLARIMKARFPRR</sequence>
<dbReference type="EC" id="3.4.11.25" evidence="1 2 3 4"/>
<dbReference type="EMBL" id="AY897555">
    <property type="protein sequence ID" value="AAX93858.1"/>
    <property type="molecule type" value="Genomic_DNA"/>
</dbReference>
<dbReference type="RefSeq" id="WP_381490266.1">
    <property type="nucleotide sequence ID" value="NZ_JBHTIK010000005.1"/>
</dbReference>
<dbReference type="PDB" id="3N2W">
    <property type="method" value="X-ray"/>
    <property type="resolution" value="1.45 A"/>
    <property type="chains" value="A/B/C/D=30-402"/>
</dbReference>
<dbReference type="PDB" id="3N33">
    <property type="method" value="X-ray"/>
    <property type="resolution" value="1.80 A"/>
    <property type="chains" value="A/B/C/D=30-402"/>
</dbReference>
<dbReference type="PDB" id="3N5I">
    <property type="method" value="X-ray"/>
    <property type="resolution" value="1.80 A"/>
    <property type="chains" value="A/B/C/D=30-402"/>
</dbReference>
<dbReference type="PDB" id="3NDV">
    <property type="method" value="X-ray"/>
    <property type="resolution" value="1.70 A"/>
    <property type="chains" value="A/B/C/D=30-402"/>
</dbReference>
<dbReference type="PDB" id="3NFB">
    <property type="method" value="X-ray"/>
    <property type="resolution" value="1.85 A"/>
    <property type="chains" value="A/B/C/D=30-402"/>
</dbReference>
<dbReference type="PDBsum" id="3N2W"/>
<dbReference type="PDBsum" id="3N33"/>
<dbReference type="PDBsum" id="3N5I"/>
<dbReference type="PDBsum" id="3NDV"/>
<dbReference type="PDBsum" id="3NFB"/>
<dbReference type="SMR" id="Q52VH2"/>
<dbReference type="DIP" id="DIP-59978N"/>
<dbReference type="MEROPS" id="P01.002"/>
<dbReference type="KEGG" id="ag:AAX93858"/>
<dbReference type="BioCyc" id="MetaCyc:MONOMER-16515"/>
<dbReference type="BRENDA" id="3.4.11.25">
    <property type="organism ID" value="12099"/>
</dbReference>
<dbReference type="EvolutionaryTrace" id="Q52VH2"/>
<dbReference type="GO" id="GO:0042597">
    <property type="term" value="C:periplasmic space"/>
    <property type="evidence" value="ECO:0007669"/>
    <property type="project" value="UniProtKB-SubCell"/>
</dbReference>
<dbReference type="GO" id="GO:0004177">
    <property type="term" value="F:aminopeptidase activity"/>
    <property type="evidence" value="ECO:0007669"/>
    <property type="project" value="UniProtKB-KW"/>
</dbReference>
<dbReference type="GO" id="GO:0042802">
    <property type="term" value="F:identical protein binding"/>
    <property type="evidence" value="ECO:0000353"/>
    <property type="project" value="IntAct"/>
</dbReference>
<dbReference type="GO" id="GO:0006508">
    <property type="term" value="P:proteolysis"/>
    <property type="evidence" value="ECO:0007669"/>
    <property type="project" value="UniProtKB-KW"/>
</dbReference>
<dbReference type="CDD" id="cd02253">
    <property type="entry name" value="DmpA"/>
    <property type="match status" value="1"/>
</dbReference>
<dbReference type="FunFam" id="3.60.70.12:FF:000004">
    <property type="entry name" value="Beta-peptidyl aminopeptidase BapA"/>
    <property type="match status" value="1"/>
</dbReference>
<dbReference type="Gene3D" id="3.60.70.12">
    <property type="entry name" value="L-amino peptidase D-ALA esterase/amidase"/>
    <property type="match status" value="1"/>
</dbReference>
<dbReference type="InterPro" id="IPR016117">
    <property type="entry name" value="ArgJ-like_dom_sf"/>
</dbReference>
<dbReference type="InterPro" id="IPR005321">
    <property type="entry name" value="Peptidase_S58_DmpA"/>
</dbReference>
<dbReference type="PANTHER" id="PTHR36512:SF3">
    <property type="entry name" value="BLR5678 PROTEIN"/>
    <property type="match status" value="1"/>
</dbReference>
<dbReference type="PANTHER" id="PTHR36512">
    <property type="entry name" value="D-AMINOPEPTIDASE"/>
    <property type="match status" value="1"/>
</dbReference>
<dbReference type="Pfam" id="PF03576">
    <property type="entry name" value="Peptidase_S58"/>
    <property type="match status" value="1"/>
</dbReference>
<dbReference type="SUPFAM" id="SSF56266">
    <property type="entry name" value="DmpA/ArgJ-like"/>
    <property type="match status" value="1"/>
</dbReference>
<comment type="function">
    <text evidence="1 2">Beta-aminopeptidase that can cleave synthetic beta-peptides which consist of backbone-elongated beta-amino acid residues that are not processed by common proteolytic enzymes. Can cleave the beta-peptides beta-homoVal-beta-homoAla-beta-homoLeu and beta-homoAla-beta-homoLeu. Requires a beta-amino acid at the N-terminus of peptide substrates and cleaves the peptide bond between the N-terminal beta-amino acid and the amino acid at the second position of tripeptidic substrates of the general structure H-betahXaa-Ile-betahTyr-OH according to the following preferences with regard to the side chain of the N-terminal beta-amino acid: aliphatic and aromatic &gt; OH-containing &gt; hydrogen, basic and polar.</text>
</comment>
<comment type="catalytic activity">
    <reaction evidence="1 2 3 4">
        <text>Cleaves N-terminal beta-homoamino acids from peptides composed of 2 to 6 amino acids.</text>
        <dbReference type="EC" id="3.4.11.25"/>
    </reaction>
</comment>
<comment type="activity regulation">
    <text evidence="2 3 4">Inhibited by AEBSF (4-(2-aminoethyl)benzenesulfonyl fluoride, Pefabloc SC), ampicillin and AMP(hyd) (ampillicin-derived penicilloic acid).</text>
</comment>
<comment type="biophysicochemical properties">
    <kinetics>
        <KM evidence="2">9 mM for beta-homoVal-beta-homoAla-beta-homoLeu</KM>
        <KM evidence="2">20 mM for beta-homoAla-beta-homoLeu</KM>
        <KM evidence="2">8.2 mM for beta-homoGly-pNA</KM>
        <KM evidence="3">1.2 mM for beta-homoAla-pNA</KM>
        <Vmax evidence="2">3.1 umol/min/mg enzyme with beta-homoVal-beta-homoAla-beta-homoLeu as substrate</Vmax>
        <Vmax evidence="2">1.1 umol/min/mg enzyme with beta-homoAla-beta-homoLeu as substrate</Vmax>
        <Vmax evidence="2">0.026 umol/min/mg enzyme with carnosine as substrate</Vmax>
        <Vmax evidence="2">0.98 umol/min/mg enzyme with beta-homoVal-Ile-beta-homoTyr as substrate</Vmax>
        <Vmax evidence="2">1.9 umol/min/mg enzyme with beta-homoVal-Ile-beta-homoTyr as substrate</Vmax>
        <Vmax evidence="2">0.68 umol/min/mg enzyme with beta-homoPhe-Ile-beta-homoTyr as substrate</Vmax>
        <Vmax evidence="2">0.47 umol/min/mg enzyme with beta-homoTyr-Ile-beta-homoTyr as substrate</Vmax>
        <Vmax evidence="2">0.047 umol/min/mg enzyme with beta-homoTrp-Ile-beta-homoTyr as substrate</Vmax>
        <Vmax evidence="2">0.095 umol/min/mg enzyme with beta-homoSer-Ile-beta-homoTyr as substrate</Vmax>
        <Vmax evidence="2">0.068 umol/min/mg enzyme with beta-homoThr-Ile-beta-homoTyr as substrate</Vmax>
        <Vmax evidence="2">0.017 umol/min/mg enzyme with beta-homoLys-Ile-beta-homoTyr as substrate</Vmax>
        <Vmax evidence="2">0.028 umol/min/mg enzyme with D-beta-homoVal-Ile-beta-homoTyr as substrate</Vmax>
        <Vmax evidence="3">16.4 umol/min/mg enzyme with beta-homoAla-pNA as substrate</Vmax>
    </kinetics>
    <phDependence>
        <text evidence="2">Optimum pH is between 8 and 9.</text>
    </phDependence>
</comment>
<comment type="subunit">
    <text evidence="1 3 4">Heterooctamer of 4 heterodimers ((alpha:beta)4); each heterodimer is composed of an alpha subunit and a beta subunit processed from the same precursor.</text>
</comment>
<comment type="interaction">
    <interactant intactId="EBI-16013301">
        <id>Q52VH2</id>
    </interactant>
    <interactant intactId="EBI-16013301">
        <id>Q52VH2</id>
        <label>bapA</label>
    </interactant>
    <organismsDiffer>false</organismsDiffer>
    <experiments>2</experiments>
</comment>
<comment type="subcellular location">
    <subcellularLocation>
        <location evidence="5">Periplasm</location>
    </subcellularLocation>
</comment>
<comment type="PTM">
    <text evidence="6">Autoproteolytic processing to generate the alpha and beta subunit is required for self-activation and is proposed to use a similar mechanism as substrate cleavage.</text>
</comment>
<comment type="similarity">
    <text evidence="7">Belongs to the peptidase S58 family.</text>
</comment>
<protein>
    <recommendedName>
        <fullName evidence="5">Beta-peptidyl aminopeptidase BapA</fullName>
        <ecNumber evidence="1 2 3 4">3.4.11.25</ecNumber>
    </recommendedName>
    <component>
        <recommendedName>
            <fullName evidence="5">Beta-peptidyl aminopeptidase BapA alpha subunit</fullName>
        </recommendedName>
    </component>
    <component>
        <recommendedName>
            <fullName evidence="5">Beta-peptidyl aminopeptidase BapA beta subunit</fullName>
        </recommendedName>
    </component>
</protein>
<gene>
    <name evidence="5" type="primary">bapA</name>
</gene>